<protein>
    <recommendedName>
        <fullName>CRISPR-associated protein Cas1 3</fullName>
    </recommendedName>
</protein>
<gene>
    <name evidence="1" type="primary">cas1-3</name>
    <name type="ordered locus">mru_1648</name>
</gene>
<sequence length="334" mass="38715">MKILIEGYNKSIHKRDNQILIMEKEGELEKINIKKIDDITIIGKGSITFDALRLISENNVRLMSIDYFGKINYTLEYPSNENIFLRKQQYKTSENHKGLIIAREMIMSKMINQKSTIKTLNKNKKLENVKIFERNINEAIKQIGSLRFGERTDIEKSKMKMMGIEGSASVDYWLAVNELLPKEIGFFSRNNRHPNDITNASLNYAYAILASEVNKALVINGLDSYCGFLHFDRQKRTSLTFDLMEEFRQQLVDKVVFSLVNTKQISNDDLDKRNNSISLDVRKLIIGRVLDKVNSNINYEGENLSYAQIIDKQAKKIVNYLINGEKYTGFSLRW</sequence>
<evidence type="ECO:0000255" key="1">
    <source>
        <dbReference type="HAMAP-Rule" id="MF_01470"/>
    </source>
</evidence>
<evidence type="ECO:0000305" key="2"/>
<dbReference type="EMBL" id="CP001719">
    <property type="protein sequence ID" value="ADC47498.1"/>
    <property type="status" value="ALT_FRAME"/>
    <property type="molecule type" value="Genomic_DNA"/>
</dbReference>
<dbReference type="SMR" id="D3E4V4"/>
<dbReference type="STRING" id="634498.mru_1648"/>
<dbReference type="KEGG" id="mru:mru_1648"/>
<dbReference type="PATRIC" id="fig|634498.28.peg.1649"/>
<dbReference type="eggNOG" id="arCOG01452">
    <property type="taxonomic scope" value="Archaea"/>
</dbReference>
<dbReference type="HOGENOM" id="CLU_052779_0_1_2"/>
<dbReference type="Proteomes" id="UP000008680">
    <property type="component" value="Chromosome"/>
</dbReference>
<dbReference type="GO" id="GO:0003677">
    <property type="term" value="F:DNA binding"/>
    <property type="evidence" value="ECO:0007669"/>
    <property type="project" value="UniProtKB-KW"/>
</dbReference>
<dbReference type="GO" id="GO:0004519">
    <property type="term" value="F:endonuclease activity"/>
    <property type="evidence" value="ECO:0007669"/>
    <property type="project" value="UniProtKB-UniRule"/>
</dbReference>
<dbReference type="GO" id="GO:0046872">
    <property type="term" value="F:metal ion binding"/>
    <property type="evidence" value="ECO:0007669"/>
    <property type="project" value="UniProtKB-UniRule"/>
</dbReference>
<dbReference type="GO" id="GO:0051607">
    <property type="term" value="P:defense response to virus"/>
    <property type="evidence" value="ECO:0007669"/>
    <property type="project" value="UniProtKB-UniRule"/>
</dbReference>
<dbReference type="GO" id="GO:0043571">
    <property type="term" value="P:maintenance of CRISPR repeat elements"/>
    <property type="evidence" value="ECO:0007669"/>
    <property type="project" value="UniProtKB-UniRule"/>
</dbReference>
<dbReference type="CDD" id="cd09634">
    <property type="entry name" value="Cas1_I-II-III"/>
    <property type="match status" value="1"/>
</dbReference>
<dbReference type="Gene3D" id="1.20.120.920">
    <property type="entry name" value="CRISPR-associated endonuclease Cas1, C-terminal domain"/>
    <property type="match status" value="1"/>
</dbReference>
<dbReference type="Gene3D" id="3.100.10.20">
    <property type="entry name" value="CRISPR-associated endonuclease Cas1, N-terminal domain"/>
    <property type="match status" value="1"/>
</dbReference>
<dbReference type="HAMAP" id="MF_01470">
    <property type="entry name" value="Cas1"/>
    <property type="match status" value="1"/>
</dbReference>
<dbReference type="InterPro" id="IPR050646">
    <property type="entry name" value="Cas1"/>
</dbReference>
<dbReference type="InterPro" id="IPR002729">
    <property type="entry name" value="CRISPR-assoc_Cas1"/>
</dbReference>
<dbReference type="InterPro" id="IPR042206">
    <property type="entry name" value="CRISPR-assoc_Cas1_C"/>
</dbReference>
<dbReference type="InterPro" id="IPR042211">
    <property type="entry name" value="CRISPR-assoc_Cas1_N"/>
</dbReference>
<dbReference type="NCBIfam" id="TIGR00287">
    <property type="entry name" value="cas1"/>
    <property type="match status" value="1"/>
</dbReference>
<dbReference type="PANTHER" id="PTHR34353">
    <property type="entry name" value="CRISPR-ASSOCIATED ENDONUCLEASE CAS1 1"/>
    <property type="match status" value="1"/>
</dbReference>
<dbReference type="PANTHER" id="PTHR34353:SF2">
    <property type="entry name" value="CRISPR-ASSOCIATED ENDONUCLEASE CAS1 1"/>
    <property type="match status" value="1"/>
</dbReference>
<dbReference type="Pfam" id="PF01867">
    <property type="entry name" value="Cas_Cas1"/>
    <property type="match status" value="1"/>
</dbReference>
<feature type="chain" id="PRO_0000417099" description="CRISPR-associated protein Cas1 3">
    <location>
        <begin position="1"/>
        <end position="334"/>
    </location>
</feature>
<feature type="binding site" evidence="1">
    <location>
        <position position="165"/>
    </location>
    <ligand>
        <name>Mn(2+)</name>
        <dbReference type="ChEBI" id="CHEBI:29035"/>
    </ligand>
</feature>
<feature type="binding site" evidence="1">
    <location>
        <position position="230"/>
    </location>
    <ligand>
        <name>Mn(2+)</name>
        <dbReference type="ChEBI" id="CHEBI:29035"/>
    </ligand>
</feature>
<feature type="binding site" evidence="1">
    <location>
        <position position="245"/>
    </location>
    <ligand>
        <name>Mn(2+)</name>
        <dbReference type="ChEBI" id="CHEBI:29035"/>
    </ligand>
</feature>
<reference key="1">
    <citation type="journal article" date="2010" name="PLoS ONE">
        <title>The genome sequence of the rumen methanogen Methanobrevibacter ruminantium reveals new possibilities for controlling ruminant methane emissions.</title>
        <authorList>
            <person name="Leahy S.C."/>
            <person name="Kelly W.J."/>
            <person name="Altermann E."/>
            <person name="Ronimus R.S."/>
            <person name="Yeoman C.J."/>
            <person name="Pacheco D.M."/>
            <person name="Li D."/>
            <person name="Kong Z."/>
            <person name="McTavish S."/>
            <person name="Sang C."/>
            <person name="Lambie S.C."/>
            <person name="Janssen P.H."/>
            <person name="Dey D."/>
            <person name="Attwood G.T."/>
        </authorList>
    </citation>
    <scope>NUCLEOTIDE SEQUENCE [LARGE SCALE GENOMIC DNA]</scope>
    <source>
        <strain>ATCC 35063 / DSM 1093 / JCM 13430 / OCM 146 / M1</strain>
    </source>
</reference>
<accession>D3E4V4</accession>
<comment type="function">
    <text evidence="1">CRISPR (clustered regularly interspaced short palindromic repeat), is an adaptive immune system that provides protection against mobile genetic elements (viruses, transposable elements and conjugative plasmids). CRISPR clusters contain spacers, sequences complementary to antecedent mobile elements, and target invading nucleic acids. CRISPR clusters are transcribed and processed into CRISPR RNA (crRNA). Acts as a dsDNA endonuclease. Involved in the integration of spacer DNA into the CRISPR cassette.</text>
</comment>
<comment type="cofactor">
    <cofactor evidence="1">
        <name>Mg(2+)</name>
        <dbReference type="ChEBI" id="CHEBI:18420"/>
    </cofactor>
    <cofactor evidence="1">
        <name>Mn(2+)</name>
        <dbReference type="ChEBI" id="CHEBI:29035"/>
    </cofactor>
</comment>
<comment type="subunit">
    <text evidence="1">Homodimer, forms a heterotetramer with a Cas2 homodimer.</text>
</comment>
<comment type="similarity">
    <text evidence="1">Belongs to the CRISPR-associated endonuclease Cas1 family.</text>
</comment>
<comment type="sequence caution" evidence="2">
    <conflict type="frameshift">
        <sequence resource="EMBL-CDS" id="ADC47498"/>
    </conflict>
</comment>
<name>CAS1C_METRM</name>
<proteinExistence type="inferred from homology"/>
<keyword id="KW-0051">Antiviral defense</keyword>
<keyword id="KW-0238">DNA-binding</keyword>
<keyword id="KW-0255">Endonuclease</keyword>
<keyword id="KW-0378">Hydrolase</keyword>
<keyword id="KW-0460">Magnesium</keyword>
<keyword id="KW-0464">Manganese</keyword>
<keyword id="KW-0479">Metal-binding</keyword>
<keyword id="KW-0540">Nuclease</keyword>
<organism>
    <name type="scientific">Methanobrevibacter ruminantium (strain ATCC 35063 / DSM 1093 / JCM 13430 / OCM 146 / M1)</name>
    <name type="common">Methanobacterium ruminantium</name>
    <dbReference type="NCBI Taxonomy" id="634498"/>
    <lineage>
        <taxon>Archaea</taxon>
        <taxon>Methanobacteriati</taxon>
        <taxon>Methanobacteriota</taxon>
        <taxon>Methanomada group</taxon>
        <taxon>Methanobacteria</taxon>
        <taxon>Methanobacteriales</taxon>
        <taxon>Methanobacteriaceae</taxon>
        <taxon>Methanobrevibacter</taxon>
    </lineage>
</organism>